<keyword id="KW-0963">Cytoplasm</keyword>
<keyword id="KW-0648">Protein biosynthesis</keyword>
<keyword id="KW-0663">Pyridoxal phosphate</keyword>
<keyword id="KW-0711">Selenium</keyword>
<keyword id="KW-0808">Transferase</keyword>
<name>SELA_CAMJ8</name>
<feature type="chain" id="PRO_1000072302" description="L-seryl-tRNA(Sec) selenium transferase">
    <location>
        <begin position="1"/>
        <end position="440"/>
    </location>
</feature>
<feature type="modified residue" description="N6-(pyridoxal phosphate)lysine" evidence="1">
    <location>
        <position position="282"/>
    </location>
</feature>
<protein>
    <recommendedName>
        <fullName evidence="1">L-seryl-tRNA(Sec) selenium transferase</fullName>
        <ecNumber evidence="1">2.9.1.1</ecNumber>
    </recommendedName>
    <alternativeName>
        <fullName evidence="1">Selenocysteine synthase</fullName>
        <shortName evidence="1">Sec synthase</shortName>
    </alternativeName>
    <alternativeName>
        <fullName evidence="1">Selenocysteinyl-tRNA(Sec) synthase</fullName>
    </alternativeName>
</protein>
<gene>
    <name evidence="1" type="primary">selA</name>
    <name type="ordered locus">C8J_1296</name>
</gene>
<accession>A8FN57</accession>
<reference key="1">
    <citation type="journal article" date="2007" name="J. Bacteriol.">
        <title>The complete genome sequence of Campylobacter jejuni strain 81116 (NCTC11828).</title>
        <authorList>
            <person name="Pearson B.M."/>
            <person name="Gaskin D.J.H."/>
            <person name="Segers R.P.A.M."/>
            <person name="Wells J.M."/>
            <person name="Nuijten P.J.M."/>
            <person name="van Vliet A.H.M."/>
        </authorList>
    </citation>
    <scope>NUCLEOTIDE SEQUENCE [LARGE SCALE GENOMIC DNA]</scope>
    <source>
        <strain>81116 / NCTC 11828</strain>
    </source>
</reference>
<proteinExistence type="inferred from homology"/>
<evidence type="ECO:0000255" key="1">
    <source>
        <dbReference type="HAMAP-Rule" id="MF_00423"/>
    </source>
</evidence>
<organism>
    <name type="scientific">Campylobacter jejuni subsp. jejuni serotype O:6 (strain 81116 / NCTC 11828)</name>
    <dbReference type="NCBI Taxonomy" id="407148"/>
    <lineage>
        <taxon>Bacteria</taxon>
        <taxon>Pseudomonadati</taxon>
        <taxon>Campylobacterota</taxon>
        <taxon>Epsilonproteobacteria</taxon>
        <taxon>Campylobacterales</taxon>
        <taxon>Campylobacteraceae</taxon>
        <taxon>Campylobacter</taxon>
    </lineage>
</organism>
<comment type="function">
    <text evidence="1">Converts seryl-tRNA(Sec) to selenocysteinyl-tRNA(Sec) required for selenoprotein biosynthesis.</text>
</comment>
<comment type="catalytic activity">
    <reaction evidence="1">
        <text>L-seryl-tRNA(Sec) + selenophosphate + H(+) = L-selenocysteinyl-tRNA(Sec) + phosphate</text>
        <dbReference type="Rhea" id="RHEA:22728"/>
        <dbReference type="Rhea" id="RHEA-COMP:9742"/>
        <dbReference type="Rhea" id="RHEA-COMP:9743"/>
        <dbReference type="ChEBI" id="CHEBI:15378"/>
        <dbReference type="ChEBI" id="CHEBI:16144"/>
        <dbReference type="ChEBI" id="CHEBI:43474"/>
        <dbReference type="ChEBI" id="CHEBI:78533"/>
        <dbReference type="ChEBI" id="CHEBI:78573"/>
        <dbReference type="EC" id="2.9.1.1"/>
    </reaction>
</comment>
<comment type="cofactor">
    <cofactor evidence="1">
        <name>pyridoxal 5'-phosphate</name>
        <dbReference type="ChEBI" id="CHEBI:597326"/>
    </cofactor>
</comment>
<comment type="pathway">
    <text evidence="1">Aminoacyl-tRNA biosynthesis; selenocysteinyl-tRNA(Sec) biosynthesis; selenocysteinyl-tRNA(Sec) from L-seryl-tRNA(Sec) (bacterial route): step 1/1.</text>
</comment>
<comment type="subcellular location">
    <subcellularLocation>
        <location evidence="1">Cytoplasm</location>
    </subcellularLocation>
</comment>
<comment type="similarity">
    <text evidence="1">Belongs to the SelA family.</text>
</comment>
<sequence>MNKFRTFPQINTLIEDESLKSYPFYIKAFFCKKVVAKLKENFSQDEISKDKLLLEIKKEIKTFYRKDLQSVINASGVVIHTNLGRSVIHEELYEACKDIICNYSNVEFDLENGKRGSRYALVLEKLKMLFECEDALVVNNNAAAVFLVLNSLCYNKEIISSRGELVEIGGSFRVPEVIKAAGVKLCEVGTSNKTHLKDYEQAISENTALILKTHKSNFALMGFHSEVNIKDLHELAKEKGLLSYYDLGSGWCENLNEKLIKNEPKIKKLVQECDILSFSGDKLFGSVQAGIILGKKELIEKLKQNQLLRMLRVDKLTLSFLNESLKAYLQKDYEKIITLKLLNDDLSFIEKKALRVQKELKFQTQLKKSKSLVGGGSMPDKSLDTYILTFQGDALKLQTRFRKENIIGRIENDEFVLDFRTIRENELQKLILIINQMENL</sequence>
<dbReference type="EC" id="2.9.1.1" evidence="1"/>
<dbReference type="EMBL" id="CP000814">
    <property type="protein sequence ID" value="ABV52894.1"/>
    <property type="molecule type" value="Genomic_DNA"/>
</dbReference>
<dbReference type="RefSeq" id="WP_002866705.1">
    <property type="nucleotide sequence ID" value="NC_009839.1"/>
</dbReference>
<dbReference type="SMR" id="A8FN57"/>
<dbReference type="KEGG" id="cju:C8J_1296"/>
<dbReference type="HOGENOM" id="CLU_038142_1_0_7"/>
<dbReference type="UniPathway" id="UPA00906">
    <property type="reaction ID" value="UER00896"/>
</dbReference>
<dbReference type="GO" id="GO:0005737">
    <property type="term" value="C:cytoplasm"/>
    <property type="evidence" value="ECO:0007669"/>
    <property type="project" value="UniProtKB-SubCell"/>
</dbReference>
<dbReference type="GO" id="GO:0004125">
    <property type="term" value="F:L-seryl-tRNA(Sec) selenium transferase activity"/>
    <property type="evidence" value="ECO:0007669"/>
    <property type="project" value="UniProtKB-UniRule"/>
</dbReference>
<dbReference type="GO" id="GO:0001717">
    <property type="term" value="P:conversion of seryl-tRNAsec to selenocys-tRNAsec"/>
    <property type="evidence" value="ECO:0007669"/>
    <property type="project" value="UniProtKB-UniRule"/>
</dbReference>
<dbReference type="GO" id="GO:0001514">
    <property type="term" value="P:selenocysteine incorporation"/>
    <property type="evidence" value="ECO:0007669"/>
    <property type="project" value="UniProtKB-UniRule"/>
</dbReference>
<dbReference type="Gene3D" id="3.90.1150.180">
    <property type="match status" value="1"/>
</dbReference>
<dbReference type="Gene3D" id="3.40.640.10">
    <property type="entry name" value="Type I PLP-dependent aspartate aminotransferase-like (Major domain)"/>
    <property type="match status" value="1"/>
</dbReference>
<dbReference type="HAMAP" id="MF_00423">
    <property type="entry name" value="SelA"/>
    <property type="match status" value="1"/>
</dbReference>
<dbReference type="InterPro" id="IPR015424">
    <property type="entry name" value="PyrdxlP-dep_Trfase"/>
</dbReference>
<dbReference type="InterPro" id="IPR015421">
    <property type="entry name" value="PyrdxlP-dep_Trfase_major"/>
</dbReference>
<dbReference type="InterPro" id="IPR018319">
    <property type="entry name" value="SelA-like"/>
</dbReference>
<dbReference type="InterPro" id="IPR004534">
    <property type="entry name" value="SelA_trans"/>
</dbReference>
<dbReference type="NCBIfam" id="TIGR00474">
    <property type="entry name" value="selA"/>
    <property type="match status" value="1"/>
</dbReference>
<dbReference type="PANTHER" id="PTHR32328">
    <property type="entry name" value="L-SERYL-TRNA(SEC) SELENIUM TRANSFERASE"/>
    <property type="match status" value="1"/>
</dbReference>
<dbReference type="PANTHER" id="PTHR32328:SF0">
    <property type="entry name" value="L-SERYL-TRNA(SEC) SELENIUM TRANSFERASE"/>
    <property type="match status" value="1"/>
</dbReference>
<dbReference type="Pfam" id="PF03841">
    <property type="entry name" value="SelA"/>
    <property type="match status" value="1"/>
</dbReference>
<dbReference type="SUPFAM" id="SSF53383">
    <property type="entry name" value="PLP-dependent transferases"/>
    <property type="match status" value="1"/>
</dbReference>